<gene>
    <name evidence="1" type="primary">aat</name>
    <name type="ordered locus">Jann_2717</name>
</gene>
<protein>
    <recommendedName>
        <fullName evidence="1">Leucyl/phenylalanyl-tRNA--protein transferase</fullName>
        <ecNumber evidence="1">2.3.2.6</ecNumber>
    </recommendedName>
    <alternativeName>
        <fullName evidence="1">L/F-transferase</fullName>
    </alternativeName>
    <alternativeName>
        <fullName evidence="1">Leucyltransferase</fullName>
    </alternativeName>
    <alternativeName>
        <fullName evidence="1">Phenyalanyltransferase</fullName>
    </alternativeName>
</protein>
<sequence length="212" mass="23473">MAHDMYPQPRPLLTPDLMIRAYAAGIFPMSEGADNPEVFWVDPQRRGVFPLNGFHISRTLRRQIRFGGYSVHINRDFAGVLDGCADREPTWINADLTACYLALHAQGLAHSVEIWDDEGLAGAVFGVTLGAAFFGESMFSRRTGGSKLALAHLIHRLRAGGFTLFDTQFVTDHLMSLGAFELPRSDYRAELSHALQLPADFMSLPEDVPLVV</sequence>
<evidence type="ECO:0000255" key="1">
    <source>
        <dbReference type="HAMAP-Rule" id="MF_00688"/>
    </source>
</evidence>
<dbReference type="EC" id="2.3.2.6" evidence="1"/>
<dbReference type="EMBL" id="CP000264">
    <property type="protein sequence ID" value="ABD55634.1"/>
    <property type="molecule type" value="Genomic_DNA"/>
</dbReference>
<dbReference type="RefSeq" id="WP_011455838.1">
    <property type="nucleotide sequence ID" value="NC_007802.1"/>
</dbReference>
<dbReference type="SMR" id="Q28NS8"/>
<dbReference type="STRING" id="290400.Jann_2717"/>
<dbReference type="KEGG" id="jan:Jann_2717"/>
<dbReference type="eggNOG" id="COG2360">
    <property type="taxonomic scope" value="Bacteria"/>
</dbReference>
<dbReference type="HOGENOM" id="CLU_075045_1_1_5"/>
<dbReference type="OrthoDB" id="9790282at2"/>
<dbReference type="Proteomes" id="UP000008326">
    <property type="component" value="Chromosome"/>
</dbReference>
<dbReference type="GO" id="GO:0005737">
    <property type="term" value="C:cytoplasm"/>
    <property type="evidence" value="ECO:0007669"/>
    <property type="project" value="UniProtKB-SubCell"/>
</dbReference>
<dbReference type="GO" id="GO:0008914">
    <property type="term" value="F:leucyl-tRNA--protein transferase activity"/>
    <property type="evidence" value="ECO:0007669"/>
    <property type="project" value="UniProtKB-UniRule"/>
</dbReference>
<dbReference type="GO" id="GO:0030163">
    <property type="term" value="P:protein catabolic process"/>
    <property type="evidence" value="ECO:0007669"/>
    <property type="project" value="UniProtKB-UniRule"/>
</dbReference>
<dbReference type="Gene3D" id="3.40.630.70">
    <property type="entry name" value="Leucyl/phenylalanyl-tRNA-protein transferase, C-terminal domain"/>
    <property type="match status" value="1"/>
</dbReference>
<dbReference type="HAMAP" id="MF_00688">
    <property type="entry name" value="Leu_Phe_trans"/>
    <property type="match status" value="1"/>
</dbReference>
<dbReference type="InterPro" id="IPR016181">
    <property type="entry name" value="Acyl_CoA_acyltransferase"/>
</dbReference>
<dbReference type="InterPro" id="IPR004616">
    <property type="entry name" value="Leu/Phe-tRNA_Trfase"/>
</dbReference>
<dbReference type="InterPro" id="IPR042203">
    <property type="entry name" value="Leu/Phe-tRNA_Trfase_C"/>
</dbReference>
<dbReference type="NCBIfam" id="TIGR00667">
    <property type="entry name" value="aat"/>
    <property type="match status" value="1"/>
</dbReference>
<dbReference type="PANTHER" id="PTHR30098">
    <property type="entry name" value="LEUCYL/PHENYLALANYL-TRNA--PROTEIN TRANSFERASE"/>
    <property type="match status" value="1"/>
</dbReference>
<dbReference type="PANTHER" id="PTHR30098:SF2">
    <property type="entry name" value="LEUCYL_PHENYLALANYL-TRNA--PROTEIN TRANSFERASE"/>
    <property type="match status" value="1"/>
</dbReference>
<dbReference type="Pfam" id="PF03588">
    <property type="entry name" value="Leu_Phe_trans"/>
    <property type="match status" value="1"/>
</dbReference>
<dbReference type="SUPFAM" id="SSF55729">
    <property type="entry name" value="Acyl-CoA N-acyltransferases (Nat)"/>
    <property type="match status" value="1"/>
</dbReference>
<reference key="1">
    <citation type="submission" date="2006-02" db="EMBL/GenBank/DDBJ databases">
        <title>Complete sequence of chromosome of Jannaschia sp. CCS1.</title>
        <authorList>
            <consortium name="US DOE Joint Genome Institute"/>
            <person name="Copeland A."/>
            <person name="Lucas S."/>
            <person name="Lapidus A."/>
            <person name="Barry K."/>
            <person name="Detter J.C."/>
            <person name="Glavina del Rio T."/>
            <person name="Hammon N."/>
            <person name="Israni S."/>
            <person name="Pitluck S."/>
            <person name="Brettin T."/>
            <person name="Bruce D."/>
            <person name="Han C."/>
            <person name="Tapia R."/>
            <person name="Gilna P."/>
            <person name="Chertkov O."/>
            <person name="Saunders E."/>
            <person name="Schmutz J."/>
            <person name="Larimer F."/>
            <person name="Land M."/>
            <person name="Kyrpides N."/>
            <person name="Lykidis A."/>
            <person name="Moran M.A."/>
            <person name="Belas R."/>
            <person name="Ye W."/>
            <person name="Buchan A."/>
            <person name="Gonzalez J.M."/>
            <person name="Schell M.A."/>
            <person name="Richardson P."/>
        </authorList>
    </citation>
    <scope>NUCLEOTIDE SEQUENCE [LARGE SCALE GENOMIC DNA]</scope>
    <source>
        <strain>CCS1</strain>
    </source>
</reference>
<name>LFTR_JANSC</name>
<proteinExistence type="inferred from homology"/>
<comment type="function">
    <text evidence="1">Functions in the N-end rule pathway of protein degradation where it conjugates Leu, Phe and, less efficiently, Met from aminoacyl-tRNAs to the N-termini of proteins containing an N-terminal arginine or lysine.</text>
</comment>
<comment type="catalytic activity">
    <reaction evidence="1">
        <text>N-terminal L-lysyl-[protein] + L-leucyl-tRNA(Leu) = N-terminal L-leucyl-L-lysyl-[protein] + tRNA(Leu) + H(+)</text>
        <dbReference type="Rhea" id="RHEA:12340"/>
        <dbReference type="Rhea" id="RHEA-COMP:9613"/>
        <dbReference type="Rhea" id="RHEA-COMP:9622"/>
        <dbReference type="Rhea" id="RHEA-COMP:12670"/>
        <dbReference type="Rhea" id="RHEA-COMP:12671"/>
        <dbReference type="ChEBI" id="CHEBI:15378"/>
        <dbReference type="ChEBI" id="CHEBI:65249"/>
        <dbReference type="ChEBI" id="CHEBI:78442"/>
        <dbReference type="ChEBI" id="CHEBI:78494"/>
        <dbReference type="ChEBI" id="CHEBI:133043"/>
        <dbReference type="EC" id="2.3.2.6"/>
    </reaction>
</comment>
<comment type="catalytic activity">
    <reaction evidence="1">
        <text>N-terminal L-arginyl-[protein] + L-leucyl-tRNA(Leu) = N-terminal L-leucyl-L-arginyl-[protein] + tRNA(Leu) + H(+)</text>
        <dbReference type="Rhea" id="RHEA:50416"/>
        <dbReference type="Rhea" id="RHEA-COMP:9613"/>
        <dbReference type="Rhea" id="RHEA-COMP:9622"/>
        <dbReference type="Rhea" id="RHEA-COMP:12672"/>
        <dbReference type="Rhea" id="RHEA-COMP:12673"/>
        <dbReference type="ChEBI" id="CHEBI:15378"/>
        <dbReference type="ChEBI" id="CHEBI:64719"/>
        <dbReference type="ChEBI" id="CHEBI:78442"/>
        <dbReference type="ChEBI" id="CHEBI:78494"/>
        <dbReference type="ChEBI" id="CHEBI:133044"/>
        <dbReference type="EC" id="2.3.2.6"/>
    </reaction>
</comment>
<comment type="catalytic activity">
    <reaction evidence="1">
        <text>L-phenylalanyl-tRNA(Phe) + an N-terminal L-alpha-aminoacyl-[protein] = an N-terminal L-phenylalanyl-L-alpha-aminoacyl-[protein] + tRNA(Phe)</text>
        <dbReference type="Rhea" id="RHEA:43632"/>
        <dbReference type="Rhea" id="RHEA-COMP:9668"/>
        <dbReference type="Rhea" id="RHEA-COMP:9699"/>
        <dbReference type="Rhea" id="RHEA-COMP:10636"/>
        <dbReference type="Rhea" id="RHEA-COMP:10637"/>
        <dbReference type="ChEBI" id="CHEBI:78442"/>
        <dbReference type="ChEBI" id="CHEBI:78531"/>
        <dbReference type="ChEBI" id="CHEBI:78597"/>
        <dbReference type="ChEBI" id="CHEBI:83561"/>
        <dbReference type="EC" id="2.3.2.6"/>
    </reaction>
</comment>
<comment type="subcellular location">
    <subcellularLocation>
        <location evidence="1">Cytoplasm</location>
    </subcellularLocation>
</comment>
<comment type="similarity">
    <text evidence="1">Belongs to the L/F-transferase family.</text>
</comment>
<feature type="chain" id="PRO_0000258062" description="Leucyl/phenylalanyl-tRNA--protein transferase">
    <location>
        <begin position="1"/>
        <end position="212"/>
    </location>
</feature>
<keyword id="KW-0012">Acyltransferase</keyword>
<keyword id="KW-0963">Cytoplasm</keyword>
<keyword id="KW-1185">Reference proteome</keyword>
<keyword id="KW-0808">Transferase</keyword>
<accession>Q28NS8</accession>
<organism>
    <name type="scientific">Jannaschia sp. (strain CCS1)</name>
    <dbReference type="NCBI Taxonomy" id="290400"/>
    <lineage>
        <taxon>Bacteria</taxon>
        <taxon>Pseudomonadati</taxon>
        <taxon>Pseudomonadota</taxon>
        <taxon>Alphaproteobacteria</taxon>
        <taxon>Rhodobacterales</taxon>
        <taxon>Roseobacteraceae</taxon>
        <taxon>Jannaschia</taxon>
    </lineage>
</organism>